<name>RL332_META1</name>
<reference key="1">
    <citation type="journal article" date="2008" name="Infect. Immun.">
        <title>Genome of Mycoplasma arthritidis.</title>
        <authorList>
            <person name="Dybvig K."/>
            <person name="Zuhua C."/>
            <person name="Lao P."/>
            <person name="Jordan D.S."/>
            <person name="French C.T."/>
            <person name="Tu A.H."/>
            <person name="Loraine A.E."/>
        </authorList>
    </citation>
    <scope>NUCLEOTIDE SEQUENCE [LARGE SCALE GENOMIC DNA]</scope>
    <source>
        <strain>158L3-1</strain>
    </source>
</reference>
<evidence type="ECO:0000255" key="1">
    <source>
        <dbReference type="HAMAP-Rule" id="MF_00294"/>
    </source>
</evidence>
<proteinExistence type="inferred from homology"/>
<dbReference type="EMBL" id="CP001047">
    <property type="protein sequence ID" value="ACF07218.1"/>
    <property type="molecule type" value="Genomic_DNA"/>
</dbReference>
<dbReference type="RefSeq" id="WP_012498175.1">
    <property type="nucleotide sequence ID" value="NC_011025.1"/>
</dbReference>
<dbReference type="SMR" id="B3PMG6"/>
<dbReference type="STRING" id="243272.MARTH_orf336"/>
<dbReference type="KEGG" id="mat:MARTH_orf336"/>
<dbReference type="eggNOG" id="COG0267">
    <property type="taxonomic scope" value="Bacteria"/>
</dbReference>
<dbReference type="HOGENOM" id="CLU_190949_0_1_14"/>
<dbReference type="Proteomes" id="UP000008812">
    <property type="component" value="Chromosome"/>
</dbReference>
<dbReference type="GO" id="GO:0005737">
    <property type="term" value="C:cytoplasm"/>
    <property type="evidence" value="ECO:0007669"/>
    <property type="project" value="UniProtKB-ARBA"/>
</dbReference>
<dbReference type="GO" id="GO:1990904">
    <property type="term" value="C:ribonucleoprotein complex"/>
    <property type="evidence" value="ECO:0007669"/>
    <property type="project" value="UniProtKB-KW"/>
</dbReference>
<dbReference type="GO" id="GO:0005840">
    <property type="term" value="C:ribosome"/>
    <property type="evidence" value="ECO:0007669"/>
    <property type="project" value="UniProtKB-KW"/>
</dbReference>
<dbReference type="GO" id="GO:0003735">
    <property type="term" value="F:structural constituent of ribosome"/>
    <property type="evidence" value="ECO:0007669"/>
    <property type="project" value="InterPro"/>
</dbReference>
<dbReference type="GO" id="GO:0006412">
    <property type="term" value="P:translation"/>
    <property type="evidence" value="ECO:0007669"/>
    <property type="project" value="UniProtKB-UniRule"/>
</dbReference>
<dbReference type="Gene3D" id="2.20.28.120">
    <property type="entry name" value="Ribosomal protein L33"/>
    <property type="match status" value="1"/>
</dbReference>
<dbReference type="HAMAP" id="MF_00294">
    <property type="entry name" value="Ribosomal_bL33"/>
    <property type="match status" value="1"/>
</dbReference>
<dbReference type="InterPro" id="IPR001705">
    <property type="entry name" value="Ribosomal_bL33"/>
</dbReference>
<dbReference type="InterPro" id="IPR018264">
    <property type="entry name" value="Ribosomal_bL33_CS"/>
</dbReference>
<dbReference type="InterPro" id="IPR038584">
    <property type="entry name" value="Ribosomal_bL33_sf"/>
</dbReference>
<dbReference type="InterPro" id="IPR011332">
    <property type="entry name" value="Ribosomal_zn-bd"/>
</dbReference>
<dbReference type="NCBIfam" id="NF001764">
    <property type="entry name" value="PRK00504.1"/>
    <property type="match status" value="1"/>
</dbReference>
<dbReference type="NCBIfam" id="NF001860">
    <property type="entry name" value="PRK00595.1"/>
    <property type="match status" value="1"/>
</dbReference>
<dbReference type="NCBIfam" id="TIGR01023">
    <property type="entry name" value="rpmG_bact"/>
    <property type="match status" value="1"/>
</dbReference>
<dbReference type="PANTHER" id="PTHR43168">
    <property type="entry name" value="50S RIBOSOMAL PROTEIN L33, CHLOROPLASTIC"/>
    <property type="match status" value="1"/>
</dbReference>
<dbReference type="PANTHER" id="PTHR43168:SF2">
    <property type="entry name" value="LARGE RIBOSOMAL SUBUNIT PROTEIN BL33C"/>
    <property type="match status" value="1"/>
</dbReference>
<dbReference type="Pfam" id="PF00471">
    <property type="entry name" value="Ribosomal_L33"/>
    <property type="match status" value="1"/>
</dbReference>
<dbReference type="SUPFAM" id="SSF57829">
    <property type="entry name" value="Zn-binding ribosomal proteins"/>
    <property type="match status" value="1"/>
</dbReference>
<dbReference type="PROSITE" id="PS00582">
    <property type="entry name" value="RIBOSOMAL_L33"/>
    <property type="match status" value="1"/>
</dbReference>
<keyword id="KW-1185">Reference proteome</keyword>
<keyword id="KW-0687">Ribonucleoprotein</keyword>
<keyword id="KW-0689">Ribosomal protein</keyword>
<organism>
    <name type="scientific">Metamycoplasma arthritidis (strain 158L3-1)</name>
    <name type="common">Mycoplasma arthritidis</name>
    <dbReference type="NCBI Taxonomy" id="243272"/>
    <lineage>
        <taxon>Bacteria</taxon>
        <taxon>Bacillati</taxon>
        <taxon>Mycoplasmatota</taxon>
        <taxon>Mycoplasmoidales</taxon>
        <taxon>Metamycoplasmataceae</taxon>
        <taxon>Metamycoplasma</taxon>
    </lineage>
</organism>
<protein>
    <recommendedName>
        <fullName evidence="1">Large ribosomal subunit protein bL33B</fullName>
    </recommendedName>
    <alternativeName>
        <fullName evidence="1">50S ribosomal protein L33 2</fullName>
    </alternativeName>
</protein>
<accession>B3PMG6</accession>
<comment type="similarity">
    <text evidence="1">Belongs to the bacterial ribosomal protein bL33 family.</text>
</comment>
<gene>
    <name evidence="1" type="primary">rpmG2</name>
    <name type="ordered locus">MARTH_orf336</name>
</gene>
<feature type="chain" id="PRO_0000356572" description="Large ribosomal subunit protein bL33B">
    <location>
        <begin position="1"/>
        <end position="50"/>
    </location>
</feature>
<sequence>MPREGLTLRCETCKMENYITKKNKKLHPDKMEVTKYCPKCNQHTNHKEKK</sequence>